<reference key="1">
    <citation type="journal article" date="2003" name="Nature">
        <title>The DNA sequence and analysis of human chromosome 6.</title>
        <authorList>
            <person name="Mungall A.J."/>
            <person name="Palmer S.A."/>
            <person name="Sims S.K."/>
            <person name="Edwards C.A."/>
            <person name="Ashurst J.L."/>
            <person name="Wilming L."/>
            <person name="Jones M.C."/>
            <person name="Horton R."/>
            <person name="Hunt S.E."/>
            <person name="Scott C.E."/>
            <person name="Gilbert J.G.R."/>
            <person name="Clamp M.E."/>
            <person name="Bethel G."/>
            <person name="Milne S."/>
            <person name="Ainscough R."/>
            <person name="Almeida J.P."/>
            <person name="Ambrose K.D."/>
            <person name="Andrews T.D."/>
            <person name="Ashwell R.I.S."/>
            <person name="Babbage A.K."/>
            <person name="Bagguley C.L."/>
            <person name="Bailey J."/>
            <person name="Banerjee R."/>
            <person name="Barker D.J."/>
            <person name="Barlow K.F."/>
            <person name="Bates K."/>
            <person name="Beare D.M."/>
            <person name="Beasley H."/>
            <person name="Beasley O."/>
            <person name="Bird C.P."/>
            <person name="Blakey S.E."/>
            <person name="Bray-Allen S."/>
            <person name="Brook J."/>
            <person name="Brown A.J."/>
            <person name="Brown J.Y."/>
            <person name="Burford D.C."/>
            <person name="Burrill W."/>
            <person name="Burton J."/>
            <person name="Carder C."/>
            <person name="Carter N.P."/>
            <person name="Chapman J.C."/>
            <person name="Clark S.Y."/>
            <person name="Clark G."/>
            <person name="Clee C.M."/>
            <person name="Clegg S."/>
            <person name="Cobley V."/>
            <person name="Collier R.E."/>
            <person name="Collins J.E."/>
            <person name="Colman L.K."/>
            <person name="Corby N.R."/>
            <person name="Coville G.J."/>
            <person name="Culley K.M."/>
            <person name="Dhami P."/>
            <person name="Davies J."/>
            <person name="Dunn M."/>
            <person name="Earthrowl M.E."/>
            <person name="Ellington A.E."/>
            <person name="Evans K.A."/>
            <person name="Faulkner L."/>
            <person name="Francis M.D."/>
            <person name="Frankish A."/>
            <person name="Frankland J."/>
            <person name="French L."/>
            <person name="Garner P."/>
            <person name="Garnett J."/>
            <person name="Ghori M.J."/>
            <person name="Gilby L.M."/>
            <person name="Gillson C.J."/>
            <person name="Glithero R.J."/>
            <person name="Grafham D.V."/>
            <person name="Grant M."/>
            <person name="Gribble S."/>
            <person name="Griffiths C."/>
            <person name="Griffiths M.N.D."/>
            <person name="Hall R."/>
            <person name="Halls K.S."/>
            <person name="Hammond S."/>
            <person name="Harley J.L."/>
            <person name="Hart E.A."/>
            <person name="Heath P.D."/>
            <person name="Heathcott R."/>
            <person name="Holmes S.J."/>
            <person name="Howden P.J."/>
            <person name="Howe K.L."/>
            <person name="Howell G.R."/>
            <person name="Huckle E."/>
            <person name="Humphray S.J."/>
            <person name="Humphries M.D."/>
            <person name="Hunt A.R."/>
            <person name="Johnson C.M."/>
            <person name="Joy A.A."/>
            <person name="Kay M."/>
            <person name="Keenan S.J."/>
            <person name="Kimberley A.M."/>
            <person name="King A."/>
            <person name="Laird G.K."/>
            <person name="Langford C."/>
            <person name="Lawlor S."/>
            <person name="Leongamornlert D.A."/>
            <person name="Leversha M."/>
            <person name="Lloyd C.R."/>
            <person name="Lloyd D.M."/>
            <person name="Loveland J.E."/>
            <person name="Lovell J."/>
            <person name="Martin S."/>
            <person name="Mashreghi-Mohammadi M."/>
            <person name="Maslen G.L."/>
            <person name="Matthews L."/>
            <person name="McCann O.T."/>
            <person name="McLaren S.J."/>
            <person name="McLay K."/>
            <person name="McMurray A."/>
            <person name="Moore M.J.F."/>
            <person name="Mullikin J.C."/>
            <person name="Niblett D."/>
            <person name="Nickerson T."/>
            <person name="Novik K.L."/>
            <person name="Oliver K."/>
            <person name="Overton-Larty E.K."/>
            <person name="Parker A."/>
            <person name="Patel R."/>
            <person name="Pearce A.V."/>
            <person name="Peck A.I."/>
            <person name="Phillimore B.J.C.T."/>
            <person name="Phillips S."/>
            <person name="Plumb R.W."/>
            <person name="Porter K.M."/>
            <person name="Ramsey Y."/>
            <person name="Ranby S.A."/>
            <person name="Rice C.M."/>
            <person name="Ross M.T."/>
            <person name="Searle S.M."/>
            <person name="Sehra H.K."/>
            <person name="Sheridan E."/>
            <person name="Skuce C.D."/>
            <person name="Smith S."/>
            <person name="Smith M."/>
            <person name="Spraggon L."/>
            <person name="Squares S.L."/>
            <person name="Steward C.A."/>
            <person name="Sycamore N."/>
            <person name="Tamlyn-Hall G."/>
            <person name="Tester J."/>
            <person name="Theaker A.J."/>
            <person name="Thomas D.W."/>
            <person name="Thorpe A."/>
            <person name="Tracey A."/>
            <person name="Tromans A."/>
            <person name="Tubby B."/>
            <person name="Wall M."/>
            <person name="Wallis J.M."/>
            <person name="West A.P."/>
            <person name="White S.S."/>
            <person name="Whitehead S.L."/>
            <person name="Whittaker H."/>
            <person name="Wild A."/>
            <person name="Willey D.J."/>
            <person name="Wilmer T.E."/>
            <person name="Wood J.M."/>
            <person name="Wray P.W."/>
            <person name="Wyatt J.C."/>
            <person name="Young L."/>
            <person name="Younger R.M."/>
            <person name="Bentley D.R."/>
            <person name="Coulson A."/>
            <person name="Durbin R.M."/>
            <person name="Hubbard T."/>
            <person name="Sulston J.E."/>
            <person name="Dunham I."/>
            <person name="Rogers J."/>
            <person name="Beck S."/>
        </authorList>
    </citation>
    <scope>NUCLEOTIDE SEQUENCE [LARGE SCALE GENOMIC DNA]</scope>
</reference>
<reference key="2">
    <citation type="submission" date="2005-09" db="EMBL/GenBank/DDBJ databases">
        <authorList>
            <person name="Mural R.J."/>
            <person name="Istrail S."/>
            <person name="Sutton G."/>
            <person name="Florea L."/>
            <person name="Halpern A.L."/>
            <person name="Mobarry C.M."/>
            <person name="Lippert R."/>
            <person name="Walenz B."/>
            <person name="Shatkay H."/>
            <person name="Dew I."/>
            <person name="Miller J.R."/>
            <person name="Flanigan M.J."/>
            <person name="Edwards N.J."/>
            <person name="Bolanos R."/>
            <person name="Fasulo D."/>
            <person name="Halldorsson B.V."/>
            <person name="Hannenhalli S."/>
            <person name="Turner R."/>
            <person name="Yooseph S."/>
            <person name="Lu F."/>
            <person name="Nusskern D.R."/>
            <person name="Shue B.C."/>
            <person name="Zheng X.H."/>
            <person name="Zhong F."/>
            <person name="Delcher A.L."/>
            <person name="Huson D.H."/>
            <person name="Kravitz S.A."/>
            <person name="Mouchard L."/>
            <person name="Reinert K."/>
            <person name="Remington K.A."/>
            <person name="Clark A.G."/>
            <person name="Waterman M.S."/>
            <person name="Eichler E.E."/>
            <person name="Adams M.D."/>
            <person name="Hunkapiller M.W."/>
            <person name="Myers E.W."/>
            <person name="Venter J.C."/>
        </authorList>
    </citation>
    <scope>NUCLEOTIDE SEQUENCE [LARGE SCALE GENOMIC DNA]</scope>
</reference>
<reference key="3">
    <citation type="journal article" date="2004" name="Genome Res.">
        <title>The status, quality, and expansion of the NIH full-length cDNA project: the Mammalian Gene Collection (MGC).</title>
        <authorList>
            <consortium name="The MGC Project Team"/>
        </authorList>
    </citation>
    <scope>NUCLEOTIDE SEQUENCE [LARGE SCALE MRNA] (ISOFORM 2)</scope>
    <source>
        <tissue>Testis</tissue>
    </source>
</reference>
<reference key="4">
    <citation type="journal article" date="1993" name="Eur. J. Biochem.">
        <title>Molecular cloning and primary structure of Man9-mannosidase from human kidney.</title>
        <authorList>
            <person name="Bause E."/>
            <person name="Bieberich E."/>
            <person name="Rolfs A."/>
            <person name="Voelker C."/>
            <person name="Schmidt B."/>
        </authorList>
    </citation>
    <scope>NUCLEOTIDE SEQUENCE [MRNA] OF 29-653 (ISOFORM 1)</scope>
    <source>
        <tissue>Kidney</tissue>
    </source>
</reference>
<reference key="5">
    <citation type="journal article" date="2009" name="Anal. Chem.">
        <title>Lys-N and trypsin cover complementary parts of the phosphoproteome in a refined SCX-based approach.</title>
        <authorList>
            <person name="Gauci S."/>
            <person name="Helbig A.O."/>
            <person name="Slijper M."/>
            <person name="Krijgsveld J."/>
            <person name="Heck A.J."/>
            <person name="Mohammed S."/>
        </authorList>
    </citation>
    <scope>IDENTIFICATION BY MASS SPECTROMETRY [LARGE SCALE ANALYSIS]</scope>
</reference>
<reference key="6">
    <citation type="journal article" date="2011" name="BMC Syst. Biol.">
        <title>Initial characterization of the human central proteome.</title>
        <authorList>
            <person name="Burkard T.R."/>
            <person name="Planyavsky M."/>
            <person name="Kaupe I."/>
            <person name="Breitwieser F.P."/>
            <person name="Buerckstuemmer T."/>
            <person name="Bennett K.L."/>
            <person name="Superti-Furga G."/>
            <person name="Colinge J."/>
        </authorList>
    </citation>
    <scope>IDENTIFICATION BY MASS SPECTROMETRY [LARGE SCALE ANALYSIS]</scope>
</reference>
<reference key="7">
    <citation type="journal article" date="2013" name="J. Proteome Res.">
        <title>Toward a comprehensive characterization of a human cancer cell phosphoproteome.</title>
        <authorList>
            <person name="Zhou H."/>
            <person name="Di Palma S."/>
            <person name="Preisinger C."/>
            <person name="Peng M."/>
            <person name="Polat A.N."/>
            <person name="Heck A.J."/>
            <person name="Mohammed S."/>
        </authorList>
    </citation>
    <scope>IDENTIFICATION BY MASS SPECTROMETRY [LARGE SCALE ANALYSIS]</scope>
    <source>
        <tissue>Erythroleukemia</tissue>
    </source>
</reference>
<feature type="chain" id="PRO_0000210308" description="Mannosyl-oligosaccharide 1,2-alpha-mannosidase IA">
    <location>
        <begin position="1"/>
        <end position="653"/>
    </location>
</feature>
<feature type="topological domain" description="Cytoplasmic" evidence="4">
    <location>
        <begin position="1"/>
        <end position="41"/>
    </location>
</feature>
<feature type="transmembrane region" description="Helical; Signal-anchor for type II membrane protein" evidence="4">
    <location>
        <begin position="42"/>
        <end position="62"/>
    </location>
</feature>
<feature type="topological domain" description="Lumenal" evidence="4">
    <location>
        <begin position="63"/>
        <end position="653"/>
    </location>
</feature>
<feature type="region of interest" description="Disordered" evidence="5">
    <location>
        <begin position="81"/>
        <end position="116"/>
    </location>
</feature>
<feature type="compositionally biased region" description="Basic and acidic residues" evidence="5">
    <location>
        <begin position="84"/>
        <end position="108"/>
    </location>
</feature>
<feature type="active site" description="Proton donor" evidence="1">
    <location>
        <position position="522"/>
    </location>
</feature>
<feature type="glycosylation site" description="N-linked (GlcNAc...) asparagine" evidence="4">
    <location>
        <position position="513"/>
    </location>
</feature>
<feature type="disulfide bond" evidence="2">
    <location>
        <begin position="476"/>
        <end position="508"/>
    </location>
</feature>
<feature type="splice variant" id="VSP_056372" description="In isoform 2." evidence="6">
    <original>E</original>
    <variation>EEIEARKGQANCPGSSSSCEVEIQ</variation>
    <location>
        <position position="201"/>
    </location>
</feature>
<feature type="splice variant" id="VSP_056373" description="In isoform 2." evidence="6">
    <original>SGIGRNWPWASGGS</original>
    <variation>RWMCNIPRAMEATI</variation>
    <location>
        <begin position="331"/>
        <end position="344"/>
    </location>
</feature>
<feature type="splice variant" id="VSP_056374" description="In isoform 2." evidence="6">
    <location>
        <begin position="345"/>
        <end position="653"/>
    </location>
</feature>
<feature type="sequence variant" id="VAR_034102" description="In dbSNP:rs35544784.">
    <original>R</original>
    <variation>G</variation>
    <location>
        <position position="651"/>
    </location>
</feature>
<feature type="sequence conflict" description="In Ref. 4; CAA52831." evidence="7" ref="4">
    <original>KGSGPAALRLTEKFVLLLV</original>
    <variation>MNSNFITFDLKMSLLPSNL</variation>
    <location>
        <begin position="29"/>
        <end position="47"/>
    </location>
</feature>
<feature type="sequence conflict" description="In Ref. 4; CAA52831." evidence="7" ref="4">
    <original>G</original>
    <variation>R</variation>
    <location>
        <position position="464"/>
    </location>
</feature>
<proteinExistence type="evidence at protein level"/>
<evidence type="ECO:0000250" key="1">
    <source>
        <dbReference type="UniProtKB" id="P31723"/>
    </source>
</evidence>
<evidence type="ECO:0000250" key="2">
    <source>
        <dbReference type="UniProtKB" id="P32906"/>
    </source>
</evidence>
<evidence type="ECO:0000250" key="3">
    <source>
        <dbReference type="UniProtKB" id="P45700"/>
    </source>
</evidence>
<evidence type="ECO:0000255" key="4"/>
<evidence type="ECO:0000256" key="5">
    <source>
        <dbReference type="SAM" id="MobiDB-lite"/>
    </source>
</evidence>
<evidence type="ECO:0000303" key="6">
    <source>
    </source>
</evidence>
<evidence type="ECO:0000305" key="7"/>
<keyword id="KW-0025">Alternative splicing</keyword>
<keyword id="KW-0106">Calcium</keyword>
<keyword id="KW-1015">Disulfide bond</keyword>
<keyword id="KW-0325">Glycoprotein</keyword>
<keyword id="KW-0326">Glycosidase</keyword>
<keyword id="KW-0333">Golgi apparatus</keyword>
<keyword id="KW-0378">Hydrolase</keyword>
<keyword id="KW-0472">Membrane</keyword>
<keyword id="KW-1267">Proteomics identification</keyword>
<keyword id="KW-1185">Reference proteome</keyword>
<keyword id="KW-0735">Signal-anchor</keyword>
<keyword id="KW-0812">Transmembrane</keyword>
<keyword id="KW-1133">Transmembrane helix</keyword>
<name>MA1A1_HUMAN</name>
<accession>P33908</accession>
<accession>E7EU32</accession>
<accession>Q6P052</accession>
<accession>Q9NU44</accession>
<accession>Q9UJI3</accession>
<gene>
    <name type="primary">MAN1A1</name>
</gene>
<sequence>MPVGGLLPLFSSPAGGVLGGGLGGGGGRKGSGPAALRLTEKFVLLLVFSAFITLCFGAIFFLPDSSKLLSGVLFHSSPALQPAADHKPGPGARAEDAAEGRARRREEGAPGDPEAALEDNLARIRENHERALREAKETLQKLPEEIQRDILLEKKKVAQDQLRDKAPFRGLPPVDFVPPIGVESREPADAAIREKRAKIKEMMKHAWNNYKGYAWGLNELKPISKGGHSSSLFGNIKGATIVDALDTLFIMEMKHEFEEAKSWVEENLDFNVNAEISVFEVNIRFVGGLLSAYYLSGEEIFRKKAVELGVKLLPAFHTPSGIPWALLNMKSGIGRNWPWASGGSSILAEFGTLHLEFMHLSHLSGNPIFAEKVMNIRTVLNKLEKPQGLYPNYLNPSSGQWGQHHVSVGGLGDSFYEYLLKAWLMSDKTDLEAKKMYFDAVQAIETHLIRKSSSGLTYIAEWKGGLLEHKMGHLTCFAGGMFALGADAAPEGMAQHYLELGAEIARTCHESYNRTFMKLGPEAFRFDGGVEAIATRQNEKYYILRPEVMETYMYMWRLTHDPKYRKWAWEAVEALENHCRVNGGYSGLRDVYLLHESYDDVQQSFFLAETLKYLYLIFSDDDLLPLEHWIFNSEAHLLPILPKDKKEVEIREE</sequence>
<comment type="function">
    <text>Involved in the maturation of Asn-linked oligosaccharides. Progressively trim alpha-1,2-linked mannose residues from Man(9)GlcNAc(2) to produce Man(5)GlcNAc(2).</text>
</comment>
<comment type="catalytic activity">
    <reaction evidence="2">
        <text>N(4)-(alpha-D-Man-(1-&gt;2)-alpha-D-Man-(1-&gt;2)-alpha-D-Man-(1-&gt;3)-[alpha-D-Man-(1-&gt;2)-alpha-D-Man-(1-&gt;3)-[alpha-D-Man-(1-&gt;2)-alpha-D-Man-(1-&gt;6)]-alpha-D-Man-(1-&gt;6)]-beta-D-Man-(1-&gt;4)-beta-D-GlcNAc-(1-&gt;4)-beta-D-GlcNAc)-L-asparaginyl-[protein] (N-glucan mannose isomer 9A1,2,3B1,2,3) + 4 H2O = N(4)-(alpha-D-Man-(1-&gt;3)-[alpha-D-Man-(1-&gt;3)-[alpha-D-Man-(1-&gt;6)]-alpha-D-Man-(1-&gt;6)]-beta-D-Man-(1-&gt;4)-beta-D-GlcNAc-(1-&gt;4)-beta-D-GlcNAc)-L-asparaginyl-[protein] (N-glucan mannose isomer 5A1,2) + 4 beta-D-mannose</text>
        <dbReference type="Rhea" id="RHEA:56008"/>
        <dbReference type="Rhea" id="RHEA-COMP:14356"/>
        <dbReference type="Rhea" id="RHEA-COMP:14367"/>
        <dbReference type="ChEBI" id="CHEBI:15377"/>
        <dbReference type="ChEBI" id="CHEBI:28563"/>
        <dbReference type="ChEBI" id="CHEBI:59087"/>
        <dbReference type="ChEBI" id="CHEBI:139493"/>
        <dbReference type="EC" id="3.2.1.113"/>
    </reaction>
</comment>
<comment type="catalytic activity">
    <reaction evidence="2">
        <text>N(4)-(alpha-D-Man-(1-&gt;2)-alpha-D-Man-(1-&gt;2)-alpha-D-Man-(1-&gt;3)-[alpha-D-Man-(1-&gt;3)-[alpha-D-Man-(1-&gt;2)-alpha-D-Man-(1-&gt;6)]-alpha-D-Man-(1-&gt;6)]-beta-D-Man-(1-&gt;4)-beta-D-GlcNAc-(1-&gt;4)-beta-D-GlcNAc)-L-asparaginyl-[protein] (N-glucan mannose isomer 8A1,2,3B1,3) + 3 H2O = N(4)-(alpha-D-Man-(1-&gt;3)-[alpha-D-Man-(1-&gt;3)-[alpha-D-Man-(1-&gt;6)]-alpha-D-Man-(1-&gt;6)]-beta-D-Man-(1-&gt;4)-beta-D-GlcNAc-(1-&gt;4)-beta-D-GlcNAc)-L-asparaginyl-[protein] (N-glucan mannose isomer 5A1,2) + 3 beta-D-mannose</text>
        <dbReference type="Rhea" id="RHEA:56028"/>
        <dbReference type="Rhea" id="RHEA-COMP:14358"/>
        <dbReference type="Rhea" id="RHEA-COMP:14367"/>
        <dbReference type="ChEBI" id="CHEBI:15377"/>
        <dbReference type="ChEBI" id="CHEBI:28563"/>
        <dbReference type="ChEBI" id="CHEBI:59087"/>
        <dbReference type="ChEBI" id="CHEBI:60628"/>
        <dbReference type="EC" id="3.2.1.113"/>
    </reaction>
</comment>
<comment type="cofactor">
    <cofactor evidence="3">
        <name>Ca(2+)</name>
        <dbReference type="ChEBI" id="CHEBI:29108"/>
    </cofactor>
</comment>
<comment type="activity regulation">
    <text>Inhibited by both 1-deoxymannojirimycin and kifunensine.</text>
</comment>
<comment type="pathway">
    <text evidence="2">Protein modification; protein glycosylation.</text>
</comment>
<comment type="interaction">
    <interactant intactId="EBI-12586254">
        <id>P33908</id>
    </interactant>
    <interactant intactId="EBI-1027362">
        <id>P01588</id>
        <label>EPO</label>
    </interactant>
    <organismsDiffer>false</organismsDiffer>
    <experiments>2</experiments>
</comment>
<comment type="subcellular location">
    <subcellularLocation>
        <location>Golgi apparatus membrane</location>
        <topology>Single-pass type II membrane protein</topology>
    </subcellularLocation>
</comment>
<comment type="alternative products">
    <event type="alternative splicing"/>
    <isoform>
        <id>P33908-1</id>
        <name>1</name>
        <sequence type="displayed"/>
    </isoform>
    <isoform>
        <id>P33908-2</id>
        <name>2</name>
        <sequence type="described" ref="VSP_056372 VSP_056373 VSP_056374"/>
    </isoform>
</comment>
<comment type="similarity">
    <text evidence="7">Belongs to the glycosyl hydrolase 47 family.</text>
</comment>
<dbReference type="EC" id="3.2.1.113" evidence="2"/>
<dbReference type="EMBL" id="AL022722">
    <property type="status" value="NOT_ANNOTATED_CDS"/>
    <property type="molecule type" value="Genomic_DNA"/>
</dbReference>
<dbReference type="EMBL" id="AL078600">
    <property type="status" value="NOT_ANNOTATED_CDS"/>
    <property type="molecule type" value="Genomic_DNA"/>
</dbReference>
<dbReference type="EMBL" id="AL138886">
    <property type="status" value="NOT_ANNOTATED_CDS"/>
    <property type="molecule type" value="Genomic_DNA"/>
</dbReference>
<dbReference type="EMBL" id="CH471051">
    <property type="protein sequence ID" value="EAW48185.1"/>
    <property type="molecule type" value="Genomic_DNA"/>
</dbReference>
<dbReference type="EMBL" id="BC065827">
    <property type="protein sequence ID" value="AAH65827.1"/>
    <property type="molecule type" value="mRNA"/>
</dbReference>
<dbReference type="EMBL" id="X74837">
    <property type="protein sequence ID" value="CAA52831.1"/>
    <property type="molecule type" value="mRNA"/>
</dbReference>
<dbReference type="CCDS" id="CCDS5122.1">
    <molecule id="P33908-1"/>
</dbReference>
<dbReference type="PIR" id="S38965">
    <property type="entry name" value="S38965"/>
</dbReference>
<dbReference type="RefSeq" id="NP_005898.2">
    <molecule id="P33908-1"/>
    <property type="nucleotide sequence ID" value="NM_005907.3"/>
</dbReference>
<dbReference type="SMR" id="P33908"/>
<dbReference type="BioGRID" id="110294">
    <property type="interactions" value="119"/>
</dbReference>
<dbReference type="FunCoup" id="P33908">
    <property type="interactions" value="3543"/>
</dbReference>
<dbReference type="IntAct" id="P33908">
    <property type="interactions" value="56"/>
</dbReference>
<dbReference type="MINT" id="P33908"/>
<dbReference type="STRING" id="9606.ENSP00000357453"/>
<dbReference type="ChEMBL" id="CHEMBL5915"/>
<dbReference type="CAZy" id="GH47">
    <property type="family name" value="Glycoside Hydrolase Family 47"/>
</dbReference>
<dbReference type="GlyCosmos" id="P33908">
    <property type="glycosylation" value="1 site, No reported glycans"/>
</dbReference>
<dbReference type="GlyGen" id="P33908">
    <property type="glycosylation" value="4 sites, 3 N-linked glycans (1 site)"/>
</dbReference>
<dbReference type="iPTMnet" id="P33908"/>
<dbReference type="PhosphoSitePlus" id="P33908"/>
<dbReference type="BioMuta" id="MAN1A1"/>
<dbReference type="DMDM" id="62906886"/>
<dbReference type="jPOST" id="P33908"/>
<dbReference type="MassIVE" id="P33908"/>
<dbReference type="PaxDb" id="9606-ENSP00000357453"/>
<dbReference type="PeptideAtlas" id="P33908"/>
<dbReference type="ProteomicsDB" id="54929">
    <molecule id="P33908-1"/>
</dbReference>
<dbReference type="ProteomicsDB" id="66803"/>
<dbReference type="Pumba" id="P33908"/>
<dbReference type="TopDownProteomics" id="P33908-1">
    <molecule id="P33908-1"/>
</dbReference>
<dbReference type="Antibodypedia" id="32605">
    <property type="antibodies" value="80 antibodies from 19 providers"/>
</dbReference>
<dbReference type="DNASU" id="4121"/>
<dbReference type="Ensembl" id="ENST00000368468.4">
    <molecule id="P33908-1"/>
    <property type="protein sequence ID" value="ENSP00000357453.3"/>
    <property type="gene ID" value="ENSG00000111885.7"/>
</dbReference>
<dbReference type="GeneID" id="4121"/>
<dbReference type="KEGG" id="hsa:4121"/>
<dbReference type="MANE-Select" id="ENST00000368468.4">
    <property type="protein sequence ID" value="ENSP00000357453.3"/>
    <property type="RefSeq nucleotide sequence ID" value="NM_005907.4"/>
    <property type="RefSeq protein sequence ID" value="NP_005898.2"/>
</dbReference>
<dbReference type="UCSC" id="uc003pym.3">
    <molecule id="P33908-1"/>
    <property type="organism name" value="human"/>
</dbReference>
<dbReference type="AGR" id="HGNC:6821"/>
<dbReference type="CTD" id="4121"/>
<dbReference type="DisGeNET" id="4121"/>
<dbReference type="GeneCards" id="MAN1A1"/>
<dbReference type="HGNC" id="HGNC:6821">
    <property type="gene designation" value="MAN1A1"/>
</dbReference>
<dbReference type="HPA" id="ENSG00000111885">
    <property type="expression patterns" value="Tissue enhanced (liver)"/>
</dbReference>
<dbReference type="MIM" id="604344">
    <property type="type" value="gene"/>
</dbReference>
<dbReference type="neXtProt" id="NX_P33908"/>
<dbReference type="OpenTargets" id="ENSG00000111885"/>
<dbReference type="PharmGKB" id="PA30570"/>
<dbReference type="VEuPathDB" id="HostDB:ENSG00000111885"/>
<dbReference type="eggNOG" id="KOG2204">
    <property type="taxonomic scope" value="Eukaryota"/>
</dbReference>
<dbReference type="GeneTree" id="ENSGT00940000158188"/>
<dbReference type="HOGENOM" id="CLU_003818_3_2_1"/>
<dbReference type="InParanoid" id="P33908"/>
<dbReference type="OMA" id="WRMFKNI"/>
<dbReference type="OrthoDB" id="8118055at2759"/>
<dbReference type="PAN-GO" id="P33908">
    <property type="GO annotations" value="4 GO annotations based on evolutionary models"/>
</dbReference>
<dbReference type="PhylomeDB" id="P33908"/>
<dbReference type="TreeFam" id="TF313420"/>
<dbReference type="BioCyc" id="MetaCyc:HS03480-MONOMER"/>
<dbReference type="BRENDA" id="3.2.1.113">
    <property type="organism ID" value="2681"/>
</dbReference>
<dbReference type="PathwayCommons" id="P33908"/>
<dbReference type="Reactome" id="R-HSA-6811438">
    <property type="pathway name" value="Intra-Golgi traffic"/>
</dbReference>
<dbReference type="Reactome" id="R-HSA-964827">
    <property type="pathway name" value="Progressive trimming of alpha-1,2-linked mannose residues from Man9/8/7GlcNAc2 to produce Man5GlcNAc2"/>
</dbReference>
<dbReference type="SignaLink" id="P33908"/>
<dbReference type="UniPathway" id="UPA00378"/>
<dbReference type="BioGRID-ORCS" id="4121">
    <property type="hits" value="11 hits in 1158 CRISPR screens"/>
</dbReference>
<dbReference type="ChiTaRS" id="MAN1A1">
    <property type="organism name" value="human"/>
</dbReference>
<dbReference type="GeneWiki" id="MAN1A1"/>
<dbReference type="GenomeRNAi" id="4121"/>
<dbReference type="Pharos" id="P33908">
    <property type="development level" value="Tbio"/>
</dbReference>
<dbReference type="PRO" id="PR:P33908"/>
<dbReference type="Proteomes" id="UP000005640">
    <property type="component" value="Chromosome 6"/>
</dbReference>
<dbReference type="RNAct" id="P33908">
    <property type="molecule type" value="protein"/>
</dbReference>
<dbReference type="Bgee" id="ENSG00000111885">
    <property type="expression patterns" value="Expressed in synovial joint and 209 other cell types or tissues"/>
</dbReference>
<dbReference type="GO" id="GO:0031410">
    <property type="term" value="C:cytoplasmic vesicle"/>
    <property type="evidence" value="ECO:0000314"/>
    <property type="project" value="UniProtKB"/>
</dbReference>
<dbReference type="GO" id="GO:0005829">
    <property type="term" value="C:cytosol"/>
    <property type="evidence" value="ECO:0000314"/>
    <property type="project" value="HPA"/>
</dbReference>
<dbReference type="GO" id="GO:0005783">
    <property type="term" value="C:endoplasmic reticulum"/>
    <property type="evidence" value="ECO:0000318"/>
    <property type="project" value="GO_Central"/>
</dbReference>
<dbReference type="GO" id="GO:0005793">
    <property type="term" value="C:endoplasmic reticulum-Golgi intermediate compartment"/>
    <property type="evidence" value="ECO:0000314"/>
    <property type="project" value="UniProtKB"/>
</dbReference>
<dbReference type="GO" id="GO:0070062">
    <property type="term" value="C:extracellular exosome"/>
    <property type="evidence" value="ECO:0007005"/>
    <property type="project" value="UniProtKB"/>
</dbReference>
<dbReference type="GO" id="GO:0005794">
    <property type="term" value="C:Golgi apparatus"/>
    <property type="evidence" value="ECO:0000314"/>
    <property type="project" value="HPA"/>
</dbReference>
<dbReference type="GO" id="GO:0000139">
    <property type="term" value="C:Golgi membrane"/>
    <property type="evidence" value="ECO:0000318"/>
    <property type="project" value="GO_Central"/>
</dbReference>
<dbReference type="GO" id="GO:0016020">
    <property type="term" value="C:membrane"/>
    <property type="evidence" value="ECO:0007005"/>
    <property type="project" value="UniProtKB"/>
</dbReference>
<dbReference type="GO" id="GO:0005509">
    <property type="term" value="F:calcium ion binding"/>
    <property type="evidence" value="ECO:0000304"/>
    <property type="project" value="ProtInc"/>
</dbReference>
<dbReference type="GO" id="GO:0015923">
    <property type="term" value="F:mannosidase activity"/>
    <property type="evidence" value="ECO:0000304"/>
    <property type="project" value="ProtInc"/>
</dbReference>
<dbReference type="GO" id="GO:0004571">
    <property type="term" value="F:mannosyl-oligosaccharide 1,2-alpha-mannosidase activity"/>
    <property type="evidence" value="ECO:0000315"/>
    <property type="project" value="UniProtKB"/>
</dbReference>
<dbReference type="GO" id="GO:0005975">
    <property type="term" value="P:carbohydrate metabolic process"/>
    <property type="evidence" value="ECO:0007669"/>
    <property type="project" value="InterPro"/>
</dbReference>
<dbReference type="GO" id="GO:0036503">
    <property type="term" value="P:ERAD pathway"/>
    <property type="evidence" value="ECO:0000314"/>
    <property type="project" value="UniProtKB"/>
</dbReference>
<dbReference type="GO" id="GO:1904381">
    <property type="term" value="P:Golgi apparatus mannose trimming"/>
    <property type="evidence" value="ECO:0000304"/>
    <property type="project" value="Reactome"/>
</dbReference>
<dbReference type="GO" id="GO:1904382">
    <property type="term" value="P:mannose trimming involved in glycoprotein ERAD pathway"/>
    <property type="evidence" value="ECO:0000314"/>
    <property type="project" value="UniProtKB"/>
</dbReference>
<dbReference type="GO" id="GO:0006486">
    <property type="term" value="P:protein glycosylation"/>
    <property type="evidence" value="ECO:0007669"/>
    <property type="project" value="UniProtKB-UniPathway"/>
</dbReference>
<dbReference type="GO" id="GO:0045047">
    <property type="term" value="P:protein targeting to ER"/>
    <property type="evidence" value="ECO:0000315"/>
    <property type="project" value="UniProtKB"/>
</dbReference>
<dbReference type="FunFam" id="1.50.10.10:FF:000002">
    <property type="entry name" value="alpha-1,2-Mannosidase"/>
    <property type="match status" value="1"/>
</dbReference>
<dbReference type="Gene3D" id="1.50.10.10">
    <property type="match status" value="1"/>
</dbReference>
<dbReference type="InterPro" id="IPR012341">
    <property type="entry name" value="6hp_glycosidase-like_sf"/>
</dbReference>
<dbReference type="InterPro" id="IPR001382">
    <property type="entry name" value="Glyco_hydro_47"/>
</dbReference>
<dbReference type="InterPro" id="IPR050749">
    <property type="entry name" value="Glycosyl_Hydrolase_47"/>
</dbReference>
<dbReference type="InterPro" id="IPR036026">
    <property type="entry name" value="Seven-hairpin_glycosidases"/>
</dbReference>
<dbReference type="PANTHER" id="PTHR11742:SF31">
    <property type="entry name" value="MANNOSYL-OLIGOSACCHARIDE 1,2-ALPHA-MANNOSIDASE IA"/>
    <property type="match status" value="1"/>
</dbReference>
<dbReference type="PANTHER" id="PTHR11742">
    <property type="entry name" value="MANNOSYL-OLIGOSACCHARIDE ALPHA-1,2-MANNOSIDASE-RELATED"/>
    <property type="match status" value="1"/>
</dbReference>
<dbReference type="Pfam" id="PF01532">
    <property type="entry name" value="Glyco_hydro_47"/>
    <property type="match status" value="1"/>
</dbReference>
<dbReference type="PRINTS" id="PR00747">
    <property type="entry name" value="GLYHDRLASE47"/>
</dbReference>
<dbReference type="SUPFAM" id="SSF48225">
    <property type="entry name" value="Seven-hairpin glycosidases"/>
    <property type="match status" value="1"/>
</dbReference>
<organism>
    <name type="scientific">Homo sapiens</name>
    <name type="common">Human</name>
    <dbReference type="NCBI Taxonomy" id="9606"/>
    <lineage>
        <taxon>Eukaryota</taxon>
        <taxon>Metazoa</taxon>
        <taxon>Chordata</taxon>
        <taxon>Craniata</taxon>
        <taxon>Vertebrata</taxon>
        <taxon>Euteleostomi</taxon>
        <taxon>Mammalia</taxon>
        <taxon>Eutheria</taxon>
        <taxon>Euarchontoglires</taxon>
        <taxon>Primates</taxon>
        <taxon>Haplorrhini</taxon>
        <taxon>Catarrhini</taxon>
        <taxon>Hominidae</taxon>
        <taxon>Homo</taxon>
    </lineage>
</organism>
<protein>
    <recommendedName>
        <fullName>Mannosyl-oligosaccharide 1,2-alpha-mannosidase IA</fullName>
        <ecNumber evidence="2">3.2.1.113</ecNumber>
    </recommendedName>
    <alternativeName>
        <fullName>Man(9)-alpha-mannosidase</fullName>
        <shortName>Man9-mannosidase</shortName>
    </alternativeName>
    <alternativeName>
        <fullName>Mannosidase alpha class 1A member 1</fullName>
    </alternativeName>
    <alternativeName>
        <fullName>Processing alpha-1,2-mannosidase IA</fullName>
        <shortName>Alpha-1,2-mannosidase IA</shortName>
    </alternativeName>
</protein>